<proteinExistence type="inferred from homology"/>
<organism>
    <name type="scientific">Vibrio cholerae serotype O1 (strain M66-2)</name>
    <dbReference type="NCBI Taxonomy" id="579112"/>
    <lineage>
        <taxon>Bacteria</taxon>
        <taxon>Pseudomonadati</taxon>
        <taxon>Pseudomonadota</taxon>
        <taxon>Gammaproteobacteria</taxon>
        <taxon>Vibrionales</taxon>
        <taxon>Vibrionaceae</taxon>
        <taxon>Vibrio</taxon>
    </lineage>
</organism>
<gene>
    <name evidence="1" type="primary">gcvP</name>
    <name type="ordered locus">VCM66_A0275</name>
</gene>
<reference key="1">
    <citation type="journal article" date="2008" name="PLoS ONE">
        <title>A recalibrated molecular clock and independent origins for the cholera pandemic clones.</title>
        <authorList>
            <person name="Feng L."/>
            <person name="Reeves P.R."/>
            <person name="Lan R."/>
            <person name="Ren Y."/>
            <person name="Gao C."/>
            <person name="Zhou Z."/>
            <person name="Ren Y."/>
            <person name="Cheng J."/>
            <person name="Wang W."/>
            <person name="Wang J."/>
            <person name="Qian W."/>
            <person name="Li D."/>
            <person name="Wang L."/>
        </authorList>
    </citation>
    <scope>NUCLEOTIDE SEQUENCE [LARGE SCALE GENOMIC DNA]</scope>
    <source>
        <strain>M66-2</strain>
    </source>
</reference>
<accession>C3LUU7</accession>
<protein>
    <recommendedName>
        <fullName evidence="1">Glycine dehydrogenase (decarboxylating)</fullName>
        <ecNumber evidence="1">1.4.4.2</ecNumber>
    </recommendedName>
    <alternativeName>
        <fullName evidence="1">Glycine cleavage system P-protein</fullName>
    </alternativeName>
    <alternativeName>
        <fullName evidence="1">Glycine decarboxylase</fullName>
    </alternativeName>
    <alternativeName>
        <fullName evidence="1">Glycine dehydrogenase (aminomethyl-transferring)</fullName>
    </alternativeName>
</protein>
<feature type="chain" id="PRO_1000147972" description="Glycine dehydrogenase (decarboxylating)">
    <location>
        <begin position="1"/>
        <end position="954"/>
    </location>
</feature>
<feature type="modified residue" description="N6-(pyridoxal phosphate)lysine" evidence="1">
    <location>
        <position position="704"/>
    </location>
</feature>
<comment type="function">
    <text evidence="1">The glycine cleavage system catalyzes the degradation of glycine. The P protein binds the alpha-amino group of glycine through its pyridoxal phosphate cofactor; CO(2) is released and the remaining methylamine moiety is then transferred to the lipoamide cofactor of the H protein.</text>
</comment>
<comment type="catalytic activity">
    <reaction evidence="1">
        <text>N(6)-[(R)-lipoyl]-L-lysyl-[glycine-cleavage complex H protein] + glycine + H(+) = N(6)-[(R)-S(8)-aminomethyldihydrolipoyl]-L-lysyl-[glycine-cleavage complex H protein] + CO2</text>
        <dbReference type="Rhea" id="RHEA:24304"/>
        <dbReference type="Rhea" id="RHEA-COMP:10494"/>
        <dbReference type="Rhea" id="RHEA-COMP:10495"/>
        <dbReference type="ChEBI" id="CHEBI:15378"/>
        <dbReference type="ChEBI" id="CHEBI:16526"/>
        <dbReference type="ChEBI" id="CHEBI:57305"/>
        <dbReference type="ChEBI" id="CHEBI:83099"/>
        <dbReference type="ChEBI" id="CHEBI:83143"/>
        <dbReference type="EC" id="1.4.4.2"/>
    </reaction>
</comment>
<comment type="cofactor">
    <cofactor evidence="1">
        <name>pyridoxal 5'-phosphate</name>
        <dbReference type="ChEBI" id="CHEBI:597326"/>
    </cofactor>
</comment>
<comment type="subunit">
    <text evidence="1">The glycine cleavage system is composed of four proteins: P, T, L and H.</text>
</comment>
<comment type="similarity">
    <text evidence="1">Belongs to the GcvP family.</text>
</comment>
<name>GCSP_VIBCM</name>
<evidence type="ECO:0000255" key="1">
    <source>
        <dbReference type="HAMAP-Rule" id="MF_00711"/>
    </source>
</evidence>
<dbReference type="EC" id="1.4.4.2" evidence="1"/>
<dbReference type="EMBL" id="CP001234">
    <property type="protein sequence ID" value="ACP07252.1"/>
    <property type="molecule type" value="Genomic_DNA"/>
</dbReference>
<dbReference type="RefSeq" id="WP_000137693.1">
    <property type="nucleotide sequence ID" value="NC_012580.1"/>
</dbReference>
<dbReference type="SMR" id="C3LUU7"/>
<dbReference type="KEGG" id="vcm:VCM66_A0275"/>
<dbReference type="HOGENOM" id="CLU_004620_1_1_6"/>
<dbReference type="Proteomes" id="UP000001217">
    <property type="component" value="Chromosome II"/>
</dbReference>
<dbReference type="GO" id="GO:0005829">
    <property type="term" value="C:cytosol"/>
    <property type="evidence" value="ECO:0007669"/>
    <property type="project" value="TreeGrafter"/>
</dbReference>
<dbReference type="GO" id="GO:0005960">
    <property type="term" value="C:glycine cleavage complex"/>
    <property type="evidence" value="ECO:0007669"/>
    <property type="project" value="TreeGrafter"/>
</dbReference>
<dbReference type="GO" id="GO:0016594">
    <property type="term" value="F:glycine binding"/>
    <property type="evidence" value="ECO:0007669"/>
    <property type="project" value="TreeGrafter"/>
</dbReference>
<dbReference type="GO" id="GO:0004375">
    <property type="term" value="F:glycine dehydrogenase (decarboxylating) activity"/>
    <property type="evidence" value="ECO:0007669"/>
    <property type="project" value="UniProtKB-EC"/>
</dbReference>
<dbReference type="GO" id="GO:0030170">
    <property type="term" value="F:pyridoxal phosphate binding"/>
    <property type="evidence" value="ECO:0007669"/>
    <property type="project" value="TreeGrafter"/>
</dbReference>
<dbReference type="GO" id="GO:0019464">
    <property type="term" value="P:glycine decarboxylation via glycine cleavage system"/>
    <property type="evidence" value="ECO:0007669"/>
    <property type="project" value="UniProtKB-UniRule"/>
</dbReference>
<dbReference type="CDD" id="cd00613">
    <property type="entry name" value="GDC-P"/>
    <property type="match status" value="1"/>
</dbReference>
<dbReference type="FunFam" id="3.40.640.10:FF:000005">
    <property type="entry name" value="Glycine dehydrogenase (decarboxylating), mitochondrial"/>
    <property type="match status" value="1"/>
</dbReference>
<dbReference type="FunFam" id="3.90.1150.10:FF:000007">
    <property type="entry name" value="Glycine dehydrogenase (decarboxylating), mitochondrial"/>
    <property type="match status" value="1"/>
</dbReference>
<dbReference type="FunFam" id="3.40.640.10:FF:000007">
    <property type="entry name" value="glycine dehydrogenase (Decarboxylating), mitochondrial"/>
    <property type="match status" value="1"/>
</dbReference>
<dbReference type="Gene3D" id="3.90.1150.10">
    <property type="entry name" value="Aspartate Aminotransferase, domain 1"/>
    <property type="match status" value="2"/>
</dbReference>
<dbReference type="Gene3D" id="3.40.640.10">
    <property type="entry name" value="Type I PLP-dependent aspartate aminotransferase-like (Major domain)"/>
    <property type="match status" value="2"/>
</dbReference>
<dbReference type="HAMAP" id="MF_00711">
    <property type="entry name" value="GcvP"/>
    <property type="match status" value="1"/>
</dbReference>
<dbReference type="InterPro" id="IPR003437">
    <property type="entry name" value="GcvP"/>
</dbReference>
<dbReference type="InterPro" id="IPR049316">
    <property type="entry name" value="GDC-P_C"/>
</dbReference>
<dbReference type="InterPro" id="IPR049315">
    <property type="entry name" value="GDC-P_N"/>
</dbReference>
<dbReference type="InterPro" id="IPR020581">
    <property type="entry name" value="GDC_P"/>
</dbReference>
<dbReference type="InterPro" id="IPR015424">
    <property type="entry name" value="PyrdxlP-dep_Trfase"/>
</dbReference>
<dbReference type="InterPro" id="IPR015421">
    <property type="entry name" value="PyrdxlP-dep_Trfase_major"/>
</dbReference>
<dbReference type="InterPro" id="IPR015422">
    <property type="entry name" value="PyrdxlP-dep_Trfase_small"/>
</dbReference>
<dbReference type="NCBIfam" id="TIGR00461">
    <property type="entry name" value="gcvP"/>
    <property type="match status" value="1"/>
</dbReference>
<dbReference type="PANTHER" id="PTHR11773:SF13">
    <property type="entry name" value="GLYCINE DEHYDROGENASE (DECARBOXYLATING)"/>
    <property type="match status" value="1"/>
</dbReference>
<dbReference type="PANTHER" id="PTHR11773">
    <property type="entry name" value="GLYCINE DEHYDROGENASE, DECARBOXYLATING"/>
    <property type="match status" value="1"/>
</dbReference>
<dbReference type="Pfam" id="PF21478">
    <property type="entry name" value="GcvP2_C"/>
    <property type="match status" value="1"/>
</dbReference>
<dbReference type="Pfam" id="PF02347">
    <property type="entry name" value="GDC-P"/>
    <property type="match status" value="2"/>
</dbReference>
<dbReference type="SUPFAM" id="SSF53383">
    <property type="entry name" value="PLP-dependent transferases"/>
    <property type="match status" value="2"/>
</dbReference>
<sequence length="954" mass="103954">MTELLHSLSTQNEFVARHNGPDKQEQATMLKTVNAESLDALIAQTVPAQIRLEAPMQLAPAQSEADMLATMKSFAKLNQLKRTFIGQGYYNTFTPNVILRNVMENPGWYTAYTPYQPEISQGRLESLLNYQQMVMDLTAMEIANASLLDEATAAAEAMALCQRAGKSKSNLFFVADDVHPQTIEVVKTRAAFLGFEVKVDSIDNITQQEAFGALLQYPGTTGEVRDLTDIIAKAQANKTLVTVATDLLASVLLKPAGEMGADVVIGSAQRFGVPMGYGGPHAAFMATRDAHKRTMPGRVIGVSIDAKGNQALRMAMQTREQHIRREKATSNICTAQALLANMAAFYAVYHGPQGLRTIARRAHHLTAILAAGLTKAGYELAHQHFFDTLAINTGAKTDALYQAAQQANINLRKLPNQLGVSFDETTTVADVEALFAIFGIKEEVHALSDRIATNELAAIPESCRRQSAFLTHPVFNTHHSETQMLRYMKHLENKDFSLTHGMIPLGSCTMKLNATAEMIPVTWPEFGALHPFVPKAQAAGYAALAEDLKQKLCEITGYDAFSLQPNSGASGEYAGLVAIQRYHQSRGEGHRNVCLIPSSAHGTNPATAAMVSMKVVVVKCDENGNIDMVDLADKIEKHKDHLSSIMITYPSTHGVYEQQVREVCEMVHAAGGQVYLDGANMNAQVGLTSPGFIGSDVSHLNLHKTFCIPHGGGGPGMGPIGVKSHLAPFLPGHIEGGVEGSDFAVSAADLGSASILPISWAYIAMMGADGLAEATKLAILNANYVMERLRPHYPILYRGANGRVAHECIIDIRPLKEETGISEEDIAKRLMDYGFHAPTMSFPVAGTLMVEPTESEDLAELDRFCDALIAIRGEIDKVKNGEWPLESNPLVHAPHTQADLREEKWDRPYSREIACFPSAHTKASKYWPTVNRVDNVYGDRNLVCSCPSIDSYQD</sequence>
<keyword id="KW-0560">Oxidoreductase</keyword>
<keyword id="KW-0663">Pyridoxal phosphate</keyword>